<dbReference type="EMBL" id="M92296">
    <property type="protein sequence ID" value="AAA36929.1"/>
    <property type="molecule type" value="Genomic_DNA"/>
</dbReference>
<dbReference type="EMBL" id="M16209">
    <property type="protein sequence ID" value="AAA36934.1"/>
    <property type="molecule type" value="Genomic_DNA"/>
</dbReference>
<dbReference type="PIR" id="B27800">
    <property type="entry name" value="B27800"/>
</dbReference>
<dbReference type="SMR" id="P18996"/>
<dbReference type="GO" id="GO:0072562">
    <property type="term" value="C:blood microparticle"/>
    <property type="evidence" value="ECO:0007669"/>
    <property type="project" value="TreeGrafter"/>
</dbReference>
<dbReference type="GO" id="GO:0031838">
    <property type="term" value="C:haptoglobin-hemoglobin complex"/>
    <property type="evidence" value="ECO:0007669"/>
    <property type="project" value="TreeGrafter"/>
</dbReference>
<dbReference type="GO" id="GO:0005833">
    <property type="term" value="C:hemoglobin complex"/>
    <property type="evidence" value="ECO:0007669"/>
    <property type="project" value="InterPro"/>
</dbReference>
<dbReference type="GO" id="GO:0031720">
    <property type="term" value="F:haptoglobin binding"/>
    <property type="evidence" value="ECO:0007669"/>
    <property type="project" value="TreeGrafter"/>
</dbReference>
<dbReference type="GO" id="GO:0020037">
    <property type="term" value="F:heme binding"/>
    <property type="evidence" value="ECO:0007669"/>
    <property type="project" value="InterPro"/>
</dbReference>
<dbReference type="GO" id="GO:0031721">
    <property type="term" value="F:hemoglobin alpha binding"/>
    <property type="evidence" value="ECO:0007669"/>
    <property type="project" value="TreeGrafter"/>
</dbReference>
<dbReference type="GO" id="GO:0046872">
    <property type="term" value="F:metal ion binding"/>
    <property type="evidence" value="ECO:0007669"/>
    <property type="project" value="UniProtKB-KW"/>
</dbReference>
<dbReference type="GO" id="GO:0043177">
    <property type="term" value="F:organic acid binding"/>
    <property type="evidence" value="ECO:0007669"/>
    <property type="project" value="TreeGrafter"/>
</dbReference>
<dbReference type="GO" id="GO:0019825">
    <property type="term" value="F:oxygen binding"/>
    <property type="evidence" value="ECO:0007669"/>
    <property type="project" value="InterPro"/>
</dbReference>
<dbReference type="GO" id="GO:0005344">
    <property type="term" value="F:oxygen carrier activity"/>
    <property type="evidence" value="ECO:0007669"/>
    <property type="project" value="UniProtKB-KW"/>
</dbReference>
<dbReference type="GO" id="GO:0004601">
    <property type="term" value="F:peroxidase activity"/>
    <property type="evidence" value="ECO:0007669"/>
    <property type="project" value="TreeGrafter"/>
</dbReference>
<dbReference type="GO" id="GO:0042744">
    <property type="term" value="P:hydrogen peroxide catabolic process"/>
    <property type="evidence" value="ECO:0007669"/>
    <property type="project" value="TreeGrafter"/>
</dbReference>
<dbReference type="CDD" id="cd08925">
    <property type="entry name" value="Hb-beta-like"/>
    <property type="match status" value="1"/>
</dbReference>
<dbReference type="FunFam" id="1.10.490.10:FF:000001">
    <property type="entry name" value="Hemoglobin subunit beta"/>
    <property type="match status" value="1"/>
</dbReference>
<dbReference type="Gene3D" id="1.10.490.10">
    <property type="entry name" value="Globins"/>
    <property type="match status" value="1"/>
</dbReference>
<dbReference type="InterPro" id="IPR000971">
    <property type="entry name" value="Globin"/>
</dbReference>
<dbReference type="InterPro" id="IPR009050">
    <property type="entry name" value="Globin-like_sf"/>
</dbReference>
<dbReference type="InterPro" id="IPR012292">
    <property type="entry name" value="Globin/Proto"/>
</dbReference>
<dbReference type="InterPro" id="IPR002337">
    <property type="entry name" value="Hemoglobin_b"/>
</dbReference>
<dbReference type="InterPro" id="IPR050056">
    <property type="entry name" value="Hemoglobin_oxygen_transport"/>
</dbReference>
<dbReference type="PANTHER" id="PTHR11442">
    <property type="entry name" value="HEMOGLOBIN FAMILY MEMBER"/>
    <property type="match status" value="1"/>
</dbReference>
<dbReference type="PANTHER" id="PTHR11442:SF52">
    <property type="entry name" value="HEMOGLOBIN SUBUNIT GAMMA-1"/>
    <property type="match status" value="1"/>
</dbReference>
<dbReference type="Pfam" id="PF00042">
    <property type="entry name" value="Globin"/>
    <property type="match status" value="1"/>
</dbReference>
<dbReference type="PRINTS" id="PR00814">
    <property type="entry name" value="BETAHAEM"/>
</dbReference>
<dbReference type="SUPFAM" id="SSF46458">
    <property type="entry name" value="Globin-like"/>
    <property type="match status" value="1"/>
</dbReference>
<dbReference type="PROSITE" id="PS01033">
    <property type="entry name" value="GLOBIN"/>
    <property type="match status" value="1"/>
</dbReference>
<organism>
    <name type="scientific">Pongo pygmaeus</name>
    <name type="common">Bornean orangutan</name>
    <dbReference type="NCBI Taxonomy" id="9600"/>
    <lineage>
        <taxon>Eukaryota</taxon>
        <taxon>Metazoa</taxon>
        <taxon>Chordata</taxon>
        <taxon>Craniata</taxon>
        <taxon>Vertebrata</taxon>
        <taxon>Euteleostomi</taxon>
        <taxon>Mammalia</taxon>
        <taxon>Eutheria</taxon>
        <taxon>Euarchontoglires</taxon>
        <taxon>Primates</taxon>
        <taxon>Haplorrhini</taxon>
        <taxon>Catarrhini</taxon>
        <taxon>Hominidae</taxon>
        <taxon>Pongo</taxon>
    </lineage>
</organism>
<name>HBG2_PONPY</name>
<comment type="function">
    <text evidence="2">Gamma chains make up the fetal hemoglobin F, in combination with alpha chains.</text>
</comment>
<comment type="subunit">
    <text evidence="2">Heterotetramer of two alpha chains and two gamma chains in fetal hemoglobin (Hb F).</text>
</comment>
<comment type="tissue specificity">
    <text>Red blood cells.</text>
</comment>
<comment type="similarity">
    <text evidence="3">Belongs to the globin family.</text>
</comment>
<protein>
    <recommendedName>
        <fullName>Hemoglobin subunit gamma-2</fullName>
    </recommendedName>
    <alternativeName>
        <fullName>Gamma-2-globin</fullName>
    </alternativeName>
    <alternativeName>
        <fullName>Hemoglobin gamma-2 chain</fullName>
    </alternativeName>
</protein>
<evidence type="ECO:0000250" key="1">
    <source>
        <dbReference type="UniProtKB" id="P68871"/>
    </source>
</evidence>
<evidence type="ECO:0000250" key="2">
    <source>
        <dbReference type="UniProtKB" id="P69892"/>
    </source>
</evidence>
<evidence type="ECO:0000255" key="3">
    <source>
        <dbReference type="PROSITE-ProRule" id="PRU00238"/>
    </source>
</evidence>
<gene>
    <name type="primary">HBG2</name>
</gene>
<sequence length="147" mass="16145">MGHFTEEDKATITSLWGKLNVEDAGGETLGRLLLVYPWTQRFFDSFGNLSSASAIMGNPKVKAHGKKVLTSLGDAVKNLDDLKGTFAQLSELHCDKLHVDPENFRLLGNVLVTVLAIHFGKEFTPEVQASWQKMVTGVASALSSRYH</sequence>
<accession>P18996</accession>
<keyword id="KW-0007">Acetylation</keyword>
<keyword id="KW-0349">Heme</keyword>
<keyword id="KW-0408">Iron</keyword>
<keyword id="KW-0479">Metal-binding</keyword>
<keyword id="KW-0561">Oxygen transport</keyword>
<keyword id="KW-0597">Phosphoprotein</keyword>
<keyword id="KW-0702">S-nitrosylation</keyword>
<keyword id="KW-0813">Transport</keyword>
<proteinExistence type="evidence at transcript level"/>
<reference key="1">
    <citation type="journal article" date="1992" name="Mol. Phylogenet. Evol.">
        <title>Reexamination of the African hominoid trichotomy with additional sequences from the primate beta-globin gene cluster.</title>
        <authorList>
            <person name="Bailey W.J."/>
            <person name="Hayasaka K."/>
            <person name="Skinner C.G."/>
            <person name="Kehoe S."/>
            <person name="Sieu L.C."/>
            <person name="Slightom J.L."/>
            <person name="Goodman M."/>
        </authorList>
    </citation>
    <scope>NUCLEOTIDE SEQUENCE [GENOMIC DNA]</scope>
</reference>
<reference key="2">
    <citation type="journal article" date="1987" name="J. Biol. Chem.">
        <title>Orangutan fetal globin genes. Nucleotide sequence reveal multiple gene conversions during hominid phylogeny.</title>
        <authorList>
            <person name="Slightom J.L."/>
            <person name="Theisen T.W."/>
            <person name="Koop B.F."/>
            <person name="Goodman M."/>
        </authorList>
    </citation>
    <scope>PRELIMINARY NUCLEOTIDE SEQUENCE [GENOMIC DNA]</scope>
</reference>
<feature type="chain" id="PRO_0000053266" description="Hemoglobin subunit gamma-2">
    <location>
        <begin position="1"/>
        <end position="147"/>
    </location>
</feature>
<feature type="domain" description="Globin" evidence="3">
    <location>
        <begin position="3"/>
        <end position="147"/>
    </location>
</feature>
<feature type="binding site" description="distal binding residue" evidence="3">
    <location>
        <position position="64"/>
    </location>
    <ligand>
        <name>heme b</name>
        <dbReference type="ChEBI" id="CHEBI:60344"/>
    </ligand>
    <ligandPart>
        <name>Fe</name>
        <dbReference type="ChEBI" id="CHEBI:18248"/>
    </ligandPart>
</feature>
<feature type="binding site" description="proximal binding residue" evidence="3">
    <location>
        <position position="93"/>
    </location>
    <ligand>
        <name>heme b</name>
        <dbReference type="ChEBI" id="CHEBI:60344"/>
    </ligand>
    <ligandPart>
        <name>Fe</name>
        <dbReference type="ChEBI" id="CHEBI:18248"/>
    </ligandPart>
</feature>
<feature type="modified residue" description="Phosphothreonine" evidence="1">
    <location>
        <position position="13"/>
    </location>
</feature>
<feature type="modified residue" description="Phosphoserine" evidence="2">
    <location>
        <position position="45"/>
    </location>
</feature>
<feature type="modified residue" description="Phosphoserine" evidence="2">
    <location>
        <position position="51"/>
    </location>
</feature>
<feature type="modified residue" description="Phosphoserine" evidence="2">
    <location>
        <position position="53"/>
    </location>
</feature>
<feature type="modified residue" description="N6-acetyllysine" evidence="1">
    <location>
        <position position="60"/>
    </location>
</feature>
<feature type="modified residue" description="N6-acetyllysine" evidence="1">
    <location>
        <position position="83"/>
    </location>
</feature>
<feature type="modified residue" description="S-nitrosocysteine" evidence="1">
    <location>
        <position position="94"/>
    </location>
</feature>
<feature type="modified residue" description="Phosphoserine" evidence="2">
    <location>
        <position position="140"/>
    </location>
</feature>
<feature type="modified residue" description="Phosphoserine" evidence="2">
    <location>
        <position position="143"/>
    </location>
</feature>
<feature type="modified residue" description="Phosphoserine" evidence="2">
    <location>
        <position position="144"/>
    </location>
</feature>